<organism>
    <name type="scientific">Histophilus somni (strain 129Pt)</name>
    <name type="common">Haemophilus somnus</name>
    <dbReference type="NCBI Taxonomy" id="205914"/>
    <lineage>
        <taxon>Bacteria</taxon>
        <taxon>Pseudomonadati</taxon>
        <taxon>Pseudomonadota</taxon>
        <taxon>Gammaproteobacteria</taxon>
        <taxon>Pasteurellales</taxon>
        <taxon>Pasteurellaceae</taxon>
        <taxon>Histophilus</taxon>
    </lineage>
</organism>
<gene>
    <name evidence="2" type="primary">mutM</name>
    <name evidence="2" type="synonym">fpg</name>
    <name type="ordered locus">HS_0146</name>
</gene>
<protein>
    <recommendedName>
        <fullName evidence="2">Formamidopyrimidine-DNA glycosylase</fullName>
        <shortName evidence="2">Fapy-DNA glycosylase</shortName>
        <ecNumber evidence="2">3.2.2.23</ecNumber>
    </recommendedName>
    <alternativeName>
        <fullName evidence="2">DNA-(apurinic or apyrimidinic site) lyase MutM</fullName>
        <shortName evidence="2">AP lyase MutM</shortName>
        <ecNumber evidence="2">4.2.99.18</ecNumber>
    </alternativeName>
</protein>
<dbReference type="EC" id="3.2.2.23" evidence="2"/>
<dbReference type="EC" id="4.2.99.18" evidence="2"/>
<dbReference type="EMBL" id="CP000436">
    <property type="protein sequence ID" value="ABI24424.1"/>
    <property type="molecule type" value="Genomic_DNA"/>
</dbReference>
<dbReference type="SMR" id="Q0I0X6"/>
<dbReference type="KEGG" id="hso:HS_0146"/>
<dbReference type="eggNOG" id="COG0266">
    <property type="taxonomic scope" value="Bacteria"/>
</dbReference>
<dbReference type="HOGENOM" id="CLU_038423_1_1_6"/>
<dbReference type="GO" id="GO:0034039">
    <property type="term" value="F:8-oxo-7,8-dihydroguanine DNA N-glycosylase activity"/>
    <property type="evidence" value="ECO:0007669"/>
    <property type="project" value="TreeGrafter"/>
</dbReference>
<dbReference type="GO" id="GO:0140078">
    <property type="term" value="F:class I DNA-(apurinic or apyrimidinic site) endonuclease activity"/>
    <property type="evidence" value="ECO:0007669"/>
    <property type="project" value="UniProtKB-EC"/>
</dbReference>
<dbReference type="GO" id="GO:0003684">
    <property type="term" value="F:damaged DNA binding"/>
    <property type="evidence" value="ECO:0007669"/>
    <property type="project" value="InterPro"/>
</dbReference>
<dbReference type="GO" id="GO:0008270">
    <property type="term" value="F:zinc ion binding"/>
    <property type="evidence" value="ECO:0007669"/>
    <property type="project" value="UniProtKB-UniRule"/>
</dbReference>
<dbReference type="GO" id="GO:0006284">
    <property type="term" value="P:base-excision repair"/>
    <property type="evidence" value="ECO:0007669"/>
    <property type="project" value="InterPro"/>
</dbReference>
<dbReference type="CDD" id="cd08966">
    <property type="entry name" value="EcFpg-like_N"/>
    <property type="match status" value="1"/>
</dbReference>
<dbReference type="FunFam" id="1.10.8.50:FF:000003">
    <property type="entry name" value="Formamidopyrimidine-DNA glycosylase"/>
    <property type="match status" value="1"/>
</dbReference>
<dbReference type="FunFam" id="3.20.190.10:FF:000001">
    <property type="entry name" value="Formamidopyrimidine-DNA glycosylase"/>
    <property type="match status" value="1"/>
</dbReference>
<dbReference type="Gene3D" id="1.10.8.50">
    <property type="match status" value="1"/>
</dbReference>
<dbReference type="Gene3D" id="3.20.190.10">
    <property type="entry name" value="MutM-like, N-terminal"/>
    <property type="match status" value="1"/>
</dbReference>
<dbReference type="HAMAP" id="MF_00103">
    <property type="entry name" value="Fapy_DNA_glycosyl"/>
    <property type="match status" value="1"/>
</dbReference>
<dbReference type="InterPro" id="IPR015886">
    <property type="entry name" value="DNA_glyclase/AP_lyase_DNA-bd"/>
</dbReference>
<dbReference type="InterPro" id="IPR015887">
    <property type="entry name" value="DNA_glyclase_Znf_dom_DNA_BS"/>
</dbReference>
<dbReference type="InterPro" id="IPR020629">
    <property type="entry name" value="Formamido-pyr_DNA_Glyclase"/>
</dbReference>
<dbReference type="InterPro" id="IPR012319">
    <property type="entry name" value="FPG_cat"/>
</dbReference>
<dbReference type="InterPro" id="IPR035937">
    <property type="entry name" value="MutM-like_N-ter"/>
</dbReference>
<dbReference type="InterPro" id="IPR010979">
    <property type="entry name" value="Ribosomal_uS13-like_H2TH"/>
</dbReference>
<dbReference type="InterPro" id="IPR000214">
    <property type="entry name" value="Znf_DNA_glyclase/AP_lyase"/>
</dbReference>
<dbReference type="InterPro" id="IPR010663">
    <property type="entry name" value="Znf_FPG/IleRS"/>
</dbReference>
<dbReference type="NCBIfam" id="TIGR00577">
    <property type="entry name" value="fpg"/>
    <property type="match status" value="1"/>
</dbReference>
<dbReference type="NCBIfam" id="NF002211">
    <property type="entry name" value="PRK01103.1"/>
    <property type="match status" value="1"/>
</dbReference>
<dbReference type="PANTHER" id="PTHR22993">
    <property type="entry name" value="FORMAMIDOPYRIMIDINE-DNA GLYCOSYLASE"/>
    <property type="match status" value="1"/>
</dbReference>
<dbReference type="PANTHER" id="PTHR22993:SF9">
    <property type="entry name" value="FORMAMIDOPYRIMIDINE-DNA GLYCOSYLASE"/>
    <property type="match status" value="1"/>
</dbReference>
<dbReference type="Pfam" id="PF01149">
    <property type="entry name" value="Fapy_DNA_glyco"/>
    <property type="match status" value="1"/>
</dbReference>
<dbReference type="Pfam" id="PF06831">
    <property type="entry name" value="H2TH"/>
    <property type="match status" value="1"/>
</dbReference>
<dbReference type="Pfam" id="PF06827">
    <property type="entry name" value="zf-FPG_IleRS"/>
    <property type="match status" value="1"/>
</dbReference>
<dbReference type="SMART" id="SM00898">
    <property type="entry name" value="Fapy_DNA_glyco"/>
    <property type="match status" value="1"/>
</dbReference>
<dbReference type="SMART" id="SM01232">
    <property type="entry name" value="H2TH"/>
    <property type="match status" value="1"/>
</dbReference>
<dbReference type="SUPFAM" id="SSF57716">
    <property type="entry name" value="Glucocorticoid receptor-like (DNA-binding domain)"/>
    <property type="match status" value="1"/>
</dbReference>
<dbReference type="SUPFAM" id="SSF81624">
    <property type="entry name" value="N-terminal domain of MutM-like DNA repair proteins"/>
    <property type="match status" value="1"/>
</dbReference>
<dbReference type="SUPFAM" id="SSF46946">
    <property type="entry name" value="S13-like H2TH domain"/>
    <property type="match status" value="1"/>
</dbReference>
<dbReference type="PROSITE" id="PS51068">
    <property type="entry name" value="FPG_CAT"/>
    <property type="match status" value="1"/>
</dbReference>
<dbReference type="PROSITE" id="PS01242">
    <property type="entry name" value="ZF_FPG_1"/>
    <property type="match status" value="1"/>
</dbReference>
<dbReference type="PROSITE" id="PS51066">
    <property type="entry name" value="ZF_FPG_2"/>
    <property type="match status" value="1"/>
</dbReference>
<name>FPG_HISS1</name>
<sequence length="270" mass="30879">MPELPEVETTLKGVSPYLKGFIIEKIVVRNPKLRWEVSKELSTFKHVKILNLTRRAKYLIIHTEQGYIIGHLGMSGSVRIVPHDNPVNKHDHFDIVMNNGKLLRYNDARRFGAWLWTNNLSEFHLFFKLGPEPLSETFNSTYLFKKSRQKSTALKTFLMDNSVVVGVGNIYANEILFLCGLHPQKIAKTLTKKQAEQLVFTIKQVLNEAIEQGGTTLKDFLQPDGRPGYFAQKLLVYGNKDKPCPRCGTKIKSIIIGQRNSFFCPQCQKK</sequence>
<keyword id="KW-0227">DNA damage</keyword>
<keyword id="KW-0234">DNA repair</keyword>
<keyword id="KW-0238">DNA-binding</keyword>
<keyword id="KW-0326">Glycosidase</keyword>
<keyword id="KW-0378">Hydrolase</keyword>
<keyword id="KW-0456">Lyase</keyword>
<keyword id="KW-0479">Metal-binding</keyword>
<keyword id="KW-0511">Multifunctional enzyme</keyword>
<keyword id="KW-0862">Zinc</keyword>
<keyword id="KW-0863">Zinc-finger</keyword>
<feature type="initiator methionine" description="Removed" evidence="1">
    <location>
        <position position="1"/>
    </location>
</feature>
<feature type="chain" id="PRO_1000008701" description="Formamidopyrimidine-DNA glycosylase">
    <location>
        <begin position="2"/>
        <end position="270"/>
    </location>
</feature>
<feature type="zinc finger region" description="FPG-type" evidence="2">
    <location>
        <begin position="235"/>
        <end position="269"/>
    </location>
</feature>
<feature type="active site" description="Schiff-base intermediate with DNA" evidence="2">
    <location>
        <position position="2"/>
    </location>
</feature>
<feature type="active site" description="Proton donor" evidence="2">
    <location>
        <position position="3"/>
    </location>
</feature>
<feature type="active site" description="Proton donor; for beta-elimination activity" evidence="2">
    <location>
        <position position="57"/>
    </location>
</feature>
<feature type="active site" description="Proton donor; for delta-elimination activity" evidence="2">
    <location>
        <position position="259"/>
    </location>
</feature>
<feature type="binding site" evidence="2">
    <location>
        <position position="90"/>
    </location>
    <ligand>
        <name>DNA</name>
        <dbReference type="ChEBI" id="CHEBI:16991"/>
    </ligand>
</feature>
<feature type="binding site" evidence="2">
    <location>
        <position position="109"/>
    </location>
    <ligand>
        <name>DNA</name>
        <dbReference type="ChEBI" id="CHEBI:16991"/>
    </ligand>
</feature>
<feature type="binding site" evidence="2">
    <location>
        <position position="150"/>
    </location>
    <ligand>
        <name>DNA</name>
        <dbReference type="ChEBI" id="CHEBI:16991"/>
    </ligand>
</feature>
<evidence type="ECO:0000250" key="1"/>
<evidence type="ECO:0000255" key="2">
    <source>
        <dbReference type="HAMAP-Rule" id="MF_00103"/>
    </source>
</evidence>
<proteinExistence type="inferred from homology"/>
<comment type="function">
    <text evidence="2">Involved in base excision repair of DNA damaged by oxidation or by mutagenic agents. Acts as a DNA glycosylase that recognizes and removes damaged bases. Has a preference for oxidized purines, such as 7,8-dihydro-8-oxoguanine (8-oxoG). Has AP (apurinic/apyrimidinic) lyase activity and introduces nicks in the DNA strand. Cleaves the DNA backbone by beta-delta elimination to generate a single-strand break at the site of the removed base with both 3'- and 5'-phosphates.</text>
</comment>
<comment type="catalytic activity">
    <reaction evidence="2">
        <text>Hydrolysis of DNA containing ring-opened 7-methylguanine residues, releasing 2,6-diamino-4-hydroxy-5-(N-methyl)formamidopyrimidine.</text>
        <dbReference type="EC" id="3.2.2.23"/>
    </reaction>
</comment>
<comment type="catalytic activity">
    <reaction evidence="2">
        <text>2'-deoxyribonucleotide-(2'-deoxyribose 5'-phosphate)-2'-deoxyribonucleotide-DNA = a 3'-end 2'-deoxyribonucleotide-(2,3-dehydro-2,3-deoxyribose 5'-phosphate)-DNA + a 5'-end 5'-phospho-2'-deoxyribonucleoside-DNA + H(+)</text>
        <dbReference type="Rhea" id="RHEA:66592"/>
        <dbReference type="Rhea" id="RHEA-COMP:13180"/>
        <dbReference type="Rhea" id="RHEA-COMP:16897"/>
        <dbReference type="Rhea" id="RHEA-COMP:17067"/>
        <dbReference type="ChEBI" id="CHEBI:15378"/>
        <dbReference type="ChEBI" id="CHEBI:136412"/>
        <dbReference type="ChEBI" id="CHEBI:157695"/>
        <dbReference type="ChEBI" id="CHEBI:167181"/>
        <dbReference type="EC" id="4.2.99.18"/>
    </reaction>
</comment>
<comment type="cofactor">
    <cofactor evidence="2">
        <name>Zn(2+)</name>
        <dbReference type="ChEBI" id="CHEBI:29105"/>
    </cofactor>
    <text evidence="2">Binds 1 zinc ion per subunit.</text>
</comment>
<comment type="subunit">
    <text evidence="2">Monomer.</text>
</comment>
<comment type="similarity">
    <text evidence="2">Belongs to the FPG family.</text>
</comment>
<reference key="1">
    <citation type="journal article" date="2007" name="J. Bacteriol.">
        <title>Complete genome sequence of Haemophilus somnus (Histophilus somni) strain 129Pt and comparison to Haemophilus ducreyi 35000HP and Haemophilus influenzae Rd.</title>
        <authorList>
            <person name="Challacombe J.F."/>
            <person name="Duncan A.J."/>
            <person name="Brettin T.S."/>
            <person name="Bruce D."/>
            <person name="Chertkov O."/>
            <person name="Detter J.C."/>
            <person name="Han C.S."/>
            <person name="Misra M."/>
            <person name="Richardson P."/>
            <person name="Tapia R."/>
            <person name="Thayer N."/>
            <person name="Xie G."/>
            <person name="Inzana T.J."/>
        </authorList>
    </citation>
    <scope>NUCLEOTIDE SEQUENCE [LARGE SCALE GENOMIC DNA]</scope>
    <source>
        <strain>129Pt</strain>
    </source>
</reference>
<accession>Q0I0X6</accession>